<keyword id="KW-0066">ATP synthesis</keyword>
<keyword id="KW-1003">Cell membrane</keyword>
<keyword id="KW-0139">CF(1)</keyword>
<keyword id="KW-0375">Hydrogen ion transport</keyword>
<keyword id="KW-0406">Ion transport</keyword>
<keyword id="KW-0472">Membrane</keyword>
<keyword id="KW-1185">Reference proteome</keyword>
<keyword id="KW-0813">Transport</keyword>
<reference key="1">
    <citation type="journal article" date="2016" name="Genome Announc.">
        <title>Complete genome sequence of Alkaliphilus metalliredigens strain QYMF, an alkaliphilic and metal-reducing bacterium isolated from borax-contaminated leachate ponds.</title>
        <authorList>
            <person name="Hwang C."/>
            <person name="Copeland A."/>
            <person name="Lucas S."/>
            <person name="Lapidus A."/>
            <person name="Barry K."/>
            <person name="Detter J.C."/>
            <person name="Glavina Del Rio T."/>
            <person name="Hammon N."/>
            <person name="Israni S."/>
            <person name="Dalin E."/>
            <person name="Tice H."/>
            <person name="Pitluck S."/>
            <person name="Chertkov O."/>
            <person name="Brettin T."/>
            <person name="Bruce D."/>
            <person name="Han C."/>
            <person name="Schmutz J."/>
            <person name="Larimer F."/>
            <person name="Land M.L."/>
            <person name="Hauser L."/>
            <person name="Kyrpides N."/>
            <person name="Mikhailova N."/>
            <person name="Ye Q."/>
            <person name="Zhou J."/>
            <person name="Richardson P."/>
            <person name="Fields M.W."/>
        </authorList>
    </citation>
    <scope>NUCLEOTIDE SEQUENCE [LARGE SCALE GENOMIC DNA]</scope>
    <source>
        <strain>QYMF</strain>
    </source>
</reference>
<accession>A6TK62</accession>
<protein>
    <recommendedName>
        <fullName evidence="1">ATP synthase subunit delta</fullName>
    </recommendedName>
    <alternativeName>
        <fullName evidence="1">ATP synthase F(1) sector subunit delta</fullName>
    </alternativeName>
    <alternativeName>
        <fullName evidence="1">F-type ATPase subunit delta</fullName>
        <shortName evidence="1">F-ATPase subunit delta</shortName>
    </alternativeName>
</protein>
<name>ATPD_ALKMQ</name>
<sequence>MAELVAKRYAKALFQVAFEMNRYEDVTEELAFVAENLKQHSDLNELLKSPVITLGEKKEILSTIFKEQISPEVFNFLRILLDKSRQGDFQEIYEEYKILADAGKNKIEAVAITALPMDNNDLLKLQVNLSMSSGKNVKLKNEIDPTVIGGVLVKMGDKIIDGTVKARLNQMQDQLLQIIV</sequence>
<proteinExistence type="inferred from homology"/>
<comment type="function">
    <text evidence="1">F(1)F(0) ATP synthase produces ATP from ADP in the presence of a proton or sodium gradient. F-type ATPases consist of two structural domains, F(1) containing the extramembraneous catalytic core and F(0) containing the membrane proton channel, linked together by a central stalk and a peripheral stalk. During catalysis, ATP synthesis in the catalytic domain of F(1) is coupled via a rotary mechanism of the central stalk subunits to proton translocation.</text>
</comment>
<comment type="function">
    <text evidence="1">This protein is part of the stalk that links CF(0) to CF(1). It either transmits conformational changes from CF(0) to CF(1) or is implicated in proton conduction.</text>
</comment>
<comment type="subunit">
    <text evidence="1">F-type ATPases have 2 components, F(1) - the catalytic core - and F(0) - the membrane proton channel. F(1) has five subunits: alpha(3), beta(3), gamma(1), delta(1), epsilon(1). F(0) has three main subunits: a(1), b(2) and c(10-14). The alpha and beta chains form an alternating ring which encloses part of the gamma chain. F(1) is attached to F(0) by a central stalk formed by the gamma and epsilon chains, while a peripheral stalk is formed by the delta and b chains.</text>
</comment>
<comment type="subcellular location">
    <subcellularLocation>
        <location evidence="1">Cell membrane</location>
        <topology evidence="1">Peripheral membrane protein</topology>
    </subcellularLocation>
</comment>
<comment type="similarity">
    <text evidence="1">Belongs to the ATPase delta chain family.</text>
</comment>
<dbReference type="EMBL" id="CP000724">
    <property type="protein sequence ID" value="ABR46580.1"/>
    <property type="molecule type" value="Genomic_DNA"/>
</dbReference>
<dbReference type="RefSeq" id="WP_011971488.1">
    <property type="nucleotide sequence ID" value="NC_009633.1"/>
</dbReference>
<dbReference type="SMR" id="A6TK62"/>
<dbReference type="STRING" id="293826.Amet_0350"/>
<dbReference type="KEGG" id="amt:Amet_0350"/>
<dbReference type="eggNOG" id="COG0712">
    <property type="taxonomic scope" value="Bacteria"/>
</dbReference>
<dbReference type="HOGENOM" id="CLU_085114_1_1_9"/>
<dbReference type="OrthoDB" id="9802471at2"/>
<dbReference type="Proteomes" id="UP000001572">
    <property type="component" value="Chromosome"/>
</dbReference>
<dbReference type="GO" id="GO:0005886">
    <property type="term" value="C:plasma membrane"/>
    <property type="evidence" value="ECO:0007669"/>
    <property type="project" value="UniProtKB-SubCell"/>
</dbReference>
<dbReference type="GO" id="GO:0045259">
    <property type="term" value="C:proton-transporting ATP synthase complex"/>
    <property type="evidence" value="ECO:0007669"/>
    <property type="project" value="UniProtKB-KW"/>
</dbReference>
<dbReference type="GO" id="GO:0046933">
    <property type="term" value="F:proton-transporting ATP synthase activity, rotational mechanism"/>
    <property type="evidence" value="ECO:0007669"/>
    <property type="project" value="UniProtKB-UniRule"/>
</dbReference>
<dbReference type="Gene3D" id="1.10.520.20">
    <property type="entry name" value="N-terminal domain of the delta subunit of the F1F0-ATP synthase"/>
    <property type="match status" value="1"/>
</dbReference>
<dbReference type="HAMAP" id="MF_01416">
    <property type="entry name" value="ATP_synth_delta_bact"/>
    <property type="match status" value="1"/>
</dbReference>
<dbReference type="InterPro" id="IPR026015">
    <property type="entry name" value="ATP_synth_OSCP/delta_N_sf"/>
</dbReference>
<dbReference type="InterPro" id="IPR020781">
    <property type="entry name" value="ATPase_OSCP/d_CS"/>
</dbReference>
<dbReference type="InterPro" id="IPR000711">
    <property type="entry name" value="ATPase_OSCP/dsu"/>
</dbReference>
<dbReference type="NCBIfam" id="TIGR01145">
    <property type="entry name" value="ATP_synt_delta"/>
    <property type="match status" value="1"/>
</dbReference>
<dbReference type="NCBIfam" id="NF004403">
    <property type="entry name" value="PRK05758.2-4"/>
    <property type="match status" value="1"/>
</dbReference>
<dbReference type="PANTHER" id="PTHR11910">
    <property type="entry name" value="ATP SYNTHASE DELTA CHAIN"/>
    <property type="match status" value="1"/>
</dbReference>
<dbReference type="Pfam" id="PF00213">
    <property type="entry name" value="OSCP"/>
    <property type="match status" value="1"/>
</dbReference>
<dbReference type="PRINTS" id="PR00125">
    <property type="entry name" value="ATPASEDELTA"/>
</dbReference>
<dbReference type="SUPFAM" id="SSF47928">
    <property type="entry name" value="N-terminal domain of the delta subunit of the F1F0-ATP synthase"/>
    <property type="match status" value="1"/>
</dbReference>
<dbReference type="PROSITE" id="PS00389">
    <property type="entry name" value="ATPASE_DELTA"/>
    <property type="match status" value="1"/>
</dbReference>
<organism>
    <name type="scientific">Alkaliphilus metalliredigens (strain QYMF)</name>
    <dbReference type="NCBI Taxonomy" id="293826"/>
    <lineage>
        <taxon>Bacteria</taxon>
        <taxon>Bacillati</taxon>
        <taxon>Bacillota</taxon>
        <taxon>Clostridia</taxon>
        <taxon>Peptostreptococcales</taxon>
        <taxon>Natronincolaceae</taxon>
        <taxon>Alkaliphilus</taxon>
    </lineage>
</organism>
<feature type="chain" id="PRO_1000184640" description="ATP synthase subunit delta">
    <location>
        <begin position="1"/>
        <end position="180"/>
    </location>
</feature>
<gene>
    <name evidence="1" type="primary">atpH</name>
    <name type="ordered locus">Amet_0350</name>
</gene>
<evidence type="ECO:0000255" key="1">
    <source>
        <dbReference type="HAMAP-Rule" id="MF_01416"/>
    </source>
</evidence>